<keyword id="KW-0067">ATP-binding</keyword>
<keyword id="KW-0963">Cytoplasm</keyword>
<keyword id="KW-0418">Kinase</keyword>
<keyword id="KW-0520">NAD</keyword>
<keyword id="KW-0521">NADP</keyword>
<keyword id="KW-0547">Nucleotide-binding</keyword>
<keyword id="KW-0808">Transferase</keyword>
<evidence type="ECO:0000255" key="1">
    <source>
        <dbReference type="HAMAP-Rule" id="MF_00361"/>
    </source>
</evidence>
<reference key="1">
    <citation type="journal article" date="2003" name="Nat. Genet.">
        <title>Comparative analysis of the genome sequences of Bordetella pertussis, Bordetella parapertussis and Bordetella bronchiseptica.</title>
        <authorList>
            <person name="Parkhill J."/>
            <person name="Sebaihia M."/>
            <person name="Preston A."/>
            <person name="Murphy L.D."/>
            <person name="Thomson N.R."/>
            <person name="Harris D.E."/>
            <person name="Holden M.T.G."/>
            <person name="Churcher C.M."/>
            <person name="Bentley S.D."/>
            <person name="Mungall K.L."/>
            <person name="Cerdeno-Tarraga A.-M."/>
            <person name="Temple L."/>
            <person name="James K.D."/>
            <person name="Harris B."/>
            <person name="Quail M.A."/>
            <person name="Achtman M."/>
            <person name="Atkin R."/>
            <person name="Baker S."/>
            <person name="Basham D."/>
            <person name="Bason N."/>
            <person name="Cherevach I."/>
            <person name="Chillingworth T."/>
            <person name="Collins M."/>
            <person name="Cronin A."/>
            <person name="Davis P."/>
            <person name="Doggett J."/>
            <person name="Feltwell T."/>
            <person name="Goble A."/>
            <person name="Hamlin N."/>
            <person name="Hauser H."/>
            <person name="Holroyd S."/>
            <person name="Jagels K."/>
            <person name="Leather S."/>
            <person name="Moule S."/>
            <person name="Norberczak H."/>
            <person name="O'Neil S."/>
            <person name="Ormond D."/>
            <person name="Price C."/>
            <person name="Rabbinowitsch E."/>
            <person name="Rutter S."/>
            <person name="Sanders M."/>
            <person name="Saunders D."/>
            <person name="Seeger K."/>
            <person name="Sharp S."/>
            <person name="Simmonds M."/>
            <person name="Skelton J."/>
            <person name="Squares R."/>
            <person name="Squares S."/>
            <person name="Stevens K."/>
            <person name="Unwin L."/>
            <person name="Whitehead S."/>
            <person name="Barrell B.G."/>
            <person name="Maskell D.J."/>
        </authorList>
    </citation>
    <scope>NUCLEOTIDE SEQUENCE [LARGE SCALE GENOMIC DNA]</scope>
    <source>
        <strain>12822 / ATCC BAA-587 / NCTC 13253</strain>
    </source>
</reference>
<sequence length="299" mass="32329">MYFPIVALIGRYQDTGLDAPLTALAQMLTQAGRRVLVEAETARNAGVSGYPVADWDEIGRTATLAVVMGGDGTVLGAARHLAPYGVPLIGINHGRLGFITDIPLQDAHDALGRVLEGNYQAEDRMLLQGGVWRGEQQMYSASAVNDVVLNRAGRGGMIEVRVELDGAFMYTQRADGLIIATPTGSTAYSLSANGPILHPGMNAMVLVPVAPQTLSNRPIVIPDSGVLNMTLTAMGRVEIGASVHFDMQTWSDLQPGDRITVQRAPHTIRFVHPEGYSFFSTLRRKLHWNLMPQATDNLE</sequence>
<protein>
    <recommendedName>
        <fullName evidence="1">NAD kinase</fullName>
        <ecNumber evidence="1">2.7.1.23</ecNumber>
    </recommendedName>
    <alternativeName>
        <fullName evidence="1">ATP-dependent NAD kinase</fullName>
    </alternativeName>
</protein>
<accession>Q7W513</accession>
<gene>
    <name evidence="1" type="primary">nadK</name>
    <name type="ordered locus">BPP3491</name>
</gene>
<dbReference type="EC" id="2.7.1.23" evidence="1"/>
<dbReference type="EMBL" id="BX640433">
    <property type="protein sequence ID" value="CAE38775.1"/>
    <property type="molecule type" value="Genomic_DNA"/>
</dbReference>
<dbReference type="RefSeq" id="WP_003814092.1">
    <property type="nucleotide sequence ID" value="NC_002928.3"/>
</dbReference>
<dbReference type="SMR" id="Q7W513"/>
<dbReference type="KEGG" id="bpa:BPP3491"/>
<dbReference type="HOGENOM" id="CLU_008831_0_1_4"/>
<dbReference type="Proteomes" id="UP000001421">
    <property type="component" value="Chromosome"/>
</dbReference>
<dbReference type="GO" id="GO:0005737">
    <property type="term" value="C:cytoplasm"/>
    <property type="evidence" value="ECO:0007669"/>
    <property type="project" value="UniProtKB-SubCell"/>
</dbReference>
<dbReference type="GO" id="GO:0005524">
    <property type="term" value="F:ATP binding"/>
    <property type="evidence" value="ECO:0007669"/>
    <property type="project" value="UniProtKB-KW"/>
</dbReference>
<dbReference type="GO" id="GO:0046872">
    <property type="term" value="F:metal ion binding"/>
    <property type="evidence" value="ECO:0007669"/>
    <property type="project" value="UniProtKB-UniRule"/>
</dbReference>
<dbReference type="GO" id="GO:0051287">
    <property type="term" value="F:NAD binding"/>
    <property type="evidence" value="ECO:0007669"/>
    <property type="project" value="UniProtKB-ARBA"/>
</dbReference>
<dbReference type="GO" id="GO:0003951">
    <property type="term" value="F:NAD+ kinase activity"/>
    <property type="evidence" value="ECO:0007669"/>
    <property type="project" value="UniProtKB-UniRule"/>
</dbReference>
<dbReference type="GO" id="GO:0019674">
    <property type="term" value="P:NAD metabolic process"/>
    <property type="evidence" value="ECO:0007669"/>
    <property type="project" value="InterPro"/>
</dbReference>
<dbReference type="GO" id="GO:0006741">
    <property type="term" value="P:NADP biosynthetic process"/>
    <property type="evidence" value="ECO:0007669"/>
    <property type="project" value="UniProtKB-UniRule"/>
</dbReference>
<dbReference type="Gene3D" id="3.40.50.10330">
    <property type="entry name" value="Probable inorganic polyphosphate/atp-NAD kinase, domain 1"/>
    <property type="match status" value="1"/>
</dbReference>
<dbReference type="Gene3D" id="2.60.200.30">
    <property type="entry name" value="Probable inorganic polyphosphate/atp-NAD kinase, domain 2"/>
    <property type="match status" value="1"/>
</dbReference>
<dbReference type="HAMAP" id="MF_00361">
    <property type="entry name" value="NAD_kinase"/>
    <property type="match status" value="1"/>
</dbReference>
<dbReference type="InterPro" id="IPR017438">
    <property type="entry name" value="ATP-NAD_kinase_N"/>
</dbReference>
<dbReference type="InterPro" id="IPR017437">
    <property type="entry name" value="ATP-NAD_kinase_PpnK-typ_C"/>
</dbReference>
<dbReference type="InterPro" id="IPR016064">
    <property type="entry name" value="NAD/diacylglycerol_kinase_sf"/>
</dbReference>
<dbReference type="InterPro" id="IPR002504">
    <property type="entry name" value="NADK"/>
</dbReference>
<dbReference type="NCBIfam" id="NF002561">
    <property type="entry name" value="PRK02155.1"/>
    <property type="match status" value="1"/>
</dbReference>
<dbReference type="PANTHER" id="PTHR20275">
    <property type="entry name" value="NAD KINASE"/>
    <property type="match status" value="1"/>
</dbReference>
<dbReference type="PANTHER" id="PTHR20275:SF0">
    <property type="entry name" value="NAD KINASE"/>
    <property type="match status" value="1"/>
</dbReference>
<dbReference type="Pfam" id="PF01513">
    <property type="entry name" value="NAD_kinase"/>
    <property type="match status" value="1"/>
</dbReference>
<dbReference type="Pfam" id="PF20143">
    <property type="entry name" value="NAD_kinase_C"/>
    <property type="match status" value="1"/>
</dbReference>
<dbReference type="SUPFAM" id="SSF111331">
    <property type="entry name" value="NAD kinase/diacylglycerol kinase-like"/>
    <property type="match status" value="1"/>
</dbReference>
<proteinExistence type="inferred from homology"/>
<name>NADK_BORPA</name>
<comment type="function">
    <text evidence="1">Involved in the regulation of the intracellular balance of NAD and NADP, and is a key enzyme in the biosynthesis of NADP. Catalyzes specifically the phosphorylation on 2'-hydroxyl of the adenosine moiety of NAD to yield NADP.</text>
</comment>
<comment type="catalytic activity">
    <reaction evidence="1">
        <text>NAD(+) + ATP = ADP + NADP(+) + H(+)</text>
        <dbReference type="Rhea" id="RHEA:18629"/>
        <dbReference type="ChEBI" id="CHEBI:15378"/>
        <dbReference type="ChEBI" id="CHEBI:30616"/>
        <dbReference type="ChEBI" id="CHEBI:57540"/>
        <dbReference type="ChEBI" id="CHEBI:58349"/>
        <dbReference type="ChEBI" id="CHEBI:456216"/>
        <dbReference type="EC" id="2.7.1.23"/>
    </reaction>
</comment>
<comment type="cofactor">
    <cofactor evidence="1">
        <name>a divalent metal cation</name>
        <dbReference type="ChEBI" id="CHEBI:60240"/>
    </cofactor>
</comment>
<comment type="subcellular location">
    <subcellularLocation>
        <location evidence="1">Cytoplasm</location>
    </subcellularLocation>
</comment>
<comment type="similarity">
    <text evidence="1">Belongs to the NAD kinase family.</text>
</comment>
<feature type="chain" id="PRO_0000229614" description="NAD kinase">
    <location>
        <begin position="1"/>
        <end position="299"/>
    </location>
</feature>
<feature type="active site" description="Proton acceptor" evidence="1">
    <location>
        <position position="71"/>
    </location>
</feature>
<feature type="binding site" evidence="1">
    <location>
        <begin position="71"/>
        <end position="72"/>
    </location>
    <ligand>
        <name>NAD(+)</name>
        <dbReference type="ChEBI" id="CHEBI:57540"/>
    </ligand>
</feature>
<feature type="binding site" evidence="1">
    <location>
        <begin position="145"/>
        <end position="146"/>
    </location>
    <ligand>
        <name>NAD(+)</name>
        <dbReference type="ChEBI" id="CHEBI:57540"/>
    </ligand>
</feature>
<feature type="binding site" evidence="1">
    <location>
        <position position="173"/>
    </location>
    <ligand>
        <name>NAD(+)</name>
        <dbReference type="ChEBI" id="CHEBI:57540"/>
    </ligand>
</feature>
<feature type="binding site" evidence="1">
    <location>
        <position position="175"/>
    </location>
    <ligand>
        <name>NAD(+)</name>
        <dbReference type="ChEBI" id="CHEBI:57540"/>
    </ligand>
</feature>
<feature type="binding site" evidence="1">
    <location>
        <begin position="186"/>
        <end position="191"/>
    </location>
    <ligand>
        <name>NAD(+)</name>
        <dbReference type="ChEBI" id="CHEBI:57540"/>
    </ligand>
</feature>
<feature type="binding site" evidence="1">
    <location>
        <position position="210"/>
    </location>
    <ligand>
        <name>NAD(+)</name>
        <dbReference type="ChEBI" id="CHEBI:57540"/>
    </ligand>
</feature>
<feature type="binding site" evidence="1">
    <location>
        <position position="248"/>
    </location>
    <ligand>
        <name>NAD(+)</name>
        <dbReference type="ChEBI" id="CHEBI:57540"/>
    </ligand>
</feature>
<organism>
    <name type="scientific">Bordetella parapertussis (strain 12822 / ATCC BAA-587 / NCTC 13253)</name>
    <dbReference type="NCBI Taxonomy" id="257311"/>
    <lineage>
        <taxon>Bacteria</taxon>
        <taxon>Pseudomonadati</taxon>
        <taxon>Pseudomonadota</taxon>
        <taxon>Betaproteobacteria</taxon>
        <taxon>Burkholderiales</taxon>
        <taxon>Alcaligenaceae</taxon>
        <taxon>Bordetella</taxon>
    </lineage>
</organism>